<feature type="chain" id="PRO_0000083444" description="GATA transcription factor 20">
    <location>
        <begin position="1"/>
        <end position="208"/>
    </location>
</feature>
<feature type="zinc finger region" description="GATA-type" evidence="2">
    <location>
        <begin position="94"/>
        <end position="119"/>
    </location>
</feature>
<comment type="function">
    <text evidence="1">Transcriptional regulator that specifically binds 5'-GATA-3' or 5'-GAT-3' motifs within gene promoters.</text>
</comment>
<comment type="subcellular location">
    <subcellularLocation>
        <location evidence="4">Nucleus</location>
    </subcellularLocation>
</comment>
<comment type="similarity">
    <text evidence="4">Belongs to the type IV zinc-finger family. Class B subfamily.</text>
</comment>
<comment type="sequence caution" evidence="4">
    <conflict type="erroneous initiation">
        <sequence resource="EMBL-CDS" id="AAD15499"/>
    </conflict>
    <text>Truncated N-terminus.</text>
</comment>
<keyword id="KW-0238">DNA-binding</keyword>
<keyword id="KW-0479">Metal-binding</keyword>
<keyword id="KW-0539">Nucleus</keyword>
<keyword id="KW-1185">Reference proteome</keyword>
<keyword id="KW-0804">Transcription</keyword>
<keyword id="KW-0805">Transcription regulation</keyword>
<keyword id="KW-0862">Zinc</keyword>
<keyword id="KW-0863">Zinc-finger</keyword>
<name>GAT20_ARATH</name>
<evidence type="ECO:0000250" key="1"/>
<evidence type="ECO:0000255" key="2">
    <source>
        <dbReference type="PROSITE-ProRule" id="PRU00094"/>
    </source>
</evidence>
<evidence type="ECO:0000303" key="3">
    <source>
    </source>
</evidence>
<evidence type="ECO:0000305" key="4"/>
<evidence type="ECO:0000312" key="5">
    <source>
        <dbReference type="Araport" id="AT2G18380"/>
    </source>
</evidence>
<evidence type="ECO:0000312" key="6">
    <source>
        <dbReference type="EMBL" id="AAD15499.1"/>
    </source>
</evidence>
<dbReference type="EMBL" id="AC006439">
    <property type="protein sequence ID" value="AAD15499.1"/>
    <property type="status" value="ALT_INIT"/>
    <property type="molecule type" value="Genomic_DNA"/>
</dbReference>
<dbReference type="EMBL" id="CP002685">
    <property type="protein sequence ID" value="AEC06763.1"/>
    <property type="molecule type" value="Genomic_DNA"/>
</dbReference>
<dbReference type="EMBL" id="BT029505">
    <property type="protein sequence ID" value="ABL66761.1"/>
    <property type="molecule type" value="mRNA"/>
</dbReference>
<dbReference type="EMBL" id="AB493551">
    <property type="protein sequence ID" value="BAH30389.1"/>
    <property type="molecule type" value="mRNA"/>
</dbReference>
<dbReference type="PIR" id="F84563">
    <property type="entry name" value="F84563"/>
</dbReference>
<dbReference type="RefSeq" id="NP_179429.2">
    <property type="nucleotide sequence ID" value="NM_127395.3"/>
</dbReference>
<dbReference type="SMR" id="Q9ZPX0"/>
<dbReference type="BioGRID" id="1710">
    <property type="interactions" value="9"/>
</dbReference>
<dbReference type="FunCoup" id="Q9ZPX0">
    <property type="interactions" value="1"/>
</dbReference>
<dbReference type="IntAct" id="Q9ZPX0">
    <property type="interactions" value="5"/>
</dbReference>
<dbReference type="STRING" id="3702.Q9ZPX0"/>
<dbReference type="PaxDb" id="3702-AT2G18380.1"/>
<dbReference type="EnsemblPlants" id="AT2G18380.1">
    <property type="protein sequence ID" value="AT2G18380.1"/>
    <property type="gene ID" value="AT2G18380"/>
</dbReference>
<dbReference type="GeneID" id="816353"/>
<dbReference type="Gramene" id="AT2G18380.1">
    <property type="protein sequence ID" value="AT2G18380.1"/>
    <property type="gene ID" value="AT2G18380"/>
</dbReference>
<dbReference type="KEGG" id="ath:AT2G18380"/>
<dbReference type="Araport" id="AT2G18380"/>
<dbReference type="TAIR" id="AT2G18380">
    <property type="gene designation" value="GATA20"/>
</dbReference>
<dbReference type="eggNOG" id="KOG1601">
    <property type="taxonomic scope" value="Eukaryota"/>
</dbReference>
<dbReference type="HOGENOM" id="CLU_062129_1_0_1"/>
<dbReference type="InParanoid" id="Q9ZPX0"/>
<dbReference type="OMA" id="GGNYYSH"/>
<dbReference type="OrthoDB" id="2162994at2759"/>
<dbReference type="PRO" id="PR:Q9ZPX0"/>
<dbReference type="Proteomes" id="UP000006548">
    <property type="component" value="Chromosome 2"/>
</dbReference>
<dbReference type="ExpressionAtlas" id="Q9ZPX0">
    <property type="expression patterns" value="baseline and differential"/>
</dbReference>
<dbReference type="GO" id="GO:0005634">
    <property type="term" value="C:nucleus"/>
    <property type="evidence" value="ECO:0007669"/>
    <property type="project" value="UniProtKB-SubCell"/>
</dbReference>
<dbReference type="GO" id="GO:0003700">
    <property type="term" value="F:DNA-binding transcription factor activity"/>
    <property type="evidence" value="ECO:0000250"/>
    <property type="project" value="TAIR"/>
</dbReference>
<dbReference type="GO" id="GO:0000976">
    <property type="term" value="F:transcription cis-regulatory region binding"/>
    <property type="evidence" value="ECO:0000353"/>
    <property type="project" value="TAIR"/>
</dbReference>
<dbReference type="GO" id="GO:0008270">
    <property type="term" value="F:zinc ion binding"/>
    <property type="evidence" value="ECO:0007669"/>
    <property type="project" value="UniProtKB-KW"/>
</dbReference>
<dbReference type="CDD" id="cd00202">
    <property type="entry name" value="ZnF_GATA"/>
    <property type="match status" value="1"/>
</dbReference>
<dbReference type="Gene3D" id="3.30.50.10">
    <property type="entry name" value="Erythroid Transcription Factor GATA-1, subunit A"/>
    <property type="match status" value="1"/>
</dbReference>
<dbReference type="InterPro" id="IPR000679">
    <property type="entry name" value="Znf_GATA"/>
</dbReference>
<dbReference type="InterPro" id="IPR013088">
    <property type="entry name" value="Znf_NHR/GATA"/>
</dbReference>
<dbReference type="PANTHER" id="PTHR46813">
    <property type="entry name" value="GATA TRANSCRIPTION FACTOR 18"/>
    <property type="match status" value="1"/>
</dbReference>
<dbReference type="PANTHER" id="PTHR46813:SF4">
    <property type="entry name" value="GATA TRANSCRIPTION FACTOR 20"/>
    <property type="match status" value="1"/>
</dbReference>
<dbReference type="Pfam" id="PF00320">
    <property type="entry name" value="GATA"/>
    <property type="match status" value="1"/>
</dbReference>
<dbReference type="SMART" id="SM00401">
    <property type="entry name" value="ZnF_GATA"/>
    <property type="match status" value="1"/>
</dbReference>
<dbReference type="SUPFAM" id="SSF57716">
    <property type="entry name" value="Glucocorticoid receptor-like (DNA-binding domain)"/>
    <property type="match status" value="1"/>
</dbReference>
<dbReference type="PROSITE" id="PS00344">
    <property type="entry name" value="GATA_ZN_FINGER_1"/>
    <property type="match status" value="1"/>
</dbReference>
<dbReference type="PROSITE" id="PS50114">
    <property type="entry name" value="GATA_ZN_FINGER_2"/>
    <property type="match status" value="1"/>
</dbReference>
<organism>
    <name type="scientific">Arabidopsis thaliana</name>
    <name type="common">Mouse-ear cress</name>
    <dbReference type="NCBI Taxonomy" id="3702"/>
    <lineage>
        <taxon>Eukaryota</taxon>
        <taxon>Viridiplantae</taxon>
        <taxon>Streptophyta</taxon>
        <taxon>Embryophyta</taxon>
        <taxon>Tracheophyta</taxon>
        <taxon>Spermatophyta</taxon>
        <taxon>Magnoliopsida</taxon>
        <taxon>eudicotyledons</taxon>
        <taxon>Gunneridae</taxon>
        <taxon>Pentapetalae</taxon>
        <taxon>rosids</taxon>
        <taxon>malvids</taxon>
        <taxon>Brassicales</taxon>
        <taxon>Brassicaceae</taxon>
        <taxon>Camelineae</taxon>
        <taxon>Arabidopsis</taxon>
    </lineage>
</organism>
<sequence>MMGYQTNSNFSMFFSSENDDQNHHNYDPYNNFSSSTSVDCTLSLGTPSTRLDDHHRFSSANSNNISGDFYIHGGNAKTSSYKKGGVAHSLPRRCASCDTTSTPLWRNGPKGPKSLCNACGIRFKKEERRATARNLTISGGGSSAAEVPVENSYNGGGNYYSHHHHHYASSSPSWAHQNTQRVPYFSPVPEMEYPYVDNVTASSFMSWN</sequence>
<accession>Q9ZPX0</accession>
<accession>A1A6I5</accession>
<accession>C0SV48</accession>
<protein>
    <recommendedName>
        <fullName evidence="6">GATA transcription factor 20</fullName>
    </recommendedName>
    <alternativeName>
        <fullName evidence="3">Protein HAN-LIKE 1</fullName>
    </alternativeName>
</protein>
<gene>
    <name evidence="6" type="primary">GATA20</name>
    <name evidence="3" type="synonym">HANL1</name>
    <name evidence="5" type="ordered locus">At2g18380</name>
    <name evidence="6" type="ORF">T30D6.11</name>
</gene>
<proteinExistence type="evidence at transcript level"/>
<reference key="1">
    <citation type="journal article" date="1999" name="Nature">
        <title>Sequence and analysis of chromosome 2 of the plant Arabidopsis thaliana.</title>
        <authorList>
            <person name="Lin X."/>
            <person name="Kaul S."/>
            <person name="Rounsley S.D."/>
            <person name="Shea T.P."/>
            <person name="Benito M.-I."/>
            <person name="Town C.D."/>
            <person name="Fujii C.Y."/>
            <person name="Mason T.M."/>
            <person name="Bowman C.L."/>
            <person name="Barnstead M.E."/>
            <person name="Feldblyum T.V."/>
            <person name="Buell C.R."/>
            <person name="Ketchum K.A."/>
            <person name="Lee J.J."/>
            <person name="Ronning C.M."/>
            <person name="Koo H.L."/>
            <person name="Moffat K.S."/>
            <person name="Cronin L.A."/>
            <person name="Shen M."/>
            <person name="Pai G."/>
            <person name="Van Aken S."/>
            <person name="Umayam L."/>
            <person name="Tallon L.J."/>
            <person name="Gill J.E."/>
            <person name="Adams M.D."/>
            <person name="Carrera A.J."/>
            <person name="Creasy T.H."/>
            <person name="Goodman H.M."/>
            <person name="Somerville C.R."/>
            <person name="Copenhaver G.P."/>
            <person name="Preuss D."/>
            <person name="Nierman W.C."/>
            <person name="White O."/>
            <person name="Eisen J.A."/>
            <person name="Salzberg S.L."/>
            <person name="Fraser C.M."/>
            <person name="Venter J.C."/>
        </authorList>
    </citation>
    <scope>NUCLEOTIDE SEQUENCE [LARGE SCALE GENOMIC DNA]</scope>
    <source>
        <strain>cv. Columbia</strain>
    </source>
</reference>
<reference key="2">
    <citation type="journal article" date="2017" name="Plant J.">
        <title>Araport11: a complete reannotation of the Arabidopsis thaliana reference genome.</title>
        <authorList>
            <person name="Cheng C.Y."/>
            <person name="Krishnakumar V."/>
            <person name="Chan A.P."/>
            <person name="Thibaud-Nissen F."/>
            <person name="Schobel S."/>
            <person name="Town C.D."/>
        </authorList>
    </citation>
    <scope>GENOME REANNOTATION</scope>
    <source>
        <strain>cv. Columbia</strain>
    </source>
</reference>
<reference key="3">
    <citation type="submission" date="2006-12" db="EMBL/GenBank/DDBJ databases">
        <title>Arabidopsis ORF clones.</title>
        <authorList>
            <person name="Bautista V.R."/>
            <person name="Kim C.J."/>
            <person name="Chen H."/>
            <person name="Quinitio C."/>
            <person name="Ecker J.R."/>
        </authorList>
    </citation>
    <scope>NUCLEOTIDE SEQUENCE [LARGE SCALE MRNA] OF 2-208</scope>
    <source>
        <strain>cv. Columbia</strain>
    </source>
</reference>
<reference key="4">
    <citation type="submission" date="2009-03" db="EMBL/GenBank/DDBJ databases">
        <title>ORF cloning and analysis of Arabidopsis transcription factor genes.</title>
        <authorList>
            <person name="Fujita M."/>
            <person name="Mizukado S."/>
            <person name="Seki M."/>
            <person name="Shinozaki K."/>
            <person name="Mitsuda N."/>
            <person name="Takiguchi Y."/>
            <person name="Takagi M."/>
        </authorList>
    </citation>
    <scope>NUCLEOTIDE SEQUENCE [LARGE SCALE MRNA] OF 2-208</scope>
</reference>
<reference key="5">
    <citation type="journal article" date="2004" name="Plant Cell">
        <title>HANABA TARANU is a GATA transcription factor that regulates shoot apical meristem and flower development in Arabidopsis.</title>
        <authorList>
            <person name="Zhao Y."/>
            <person name="Medrano L."/>
            <person name="Ohashi K."/>
            <person name="Fletcher J.C."/>
            <person name="Yu H."/>
            <person name="Sakai H."/>
            <person name="Meyerowitz E.M."/>
        </authorList>
    </citation>
    <scope>GENE FAMILY</scope>
    <scope>NOMENCLATURE</scope>
    <source>
        <strain>cv. Columbia</strain>
        <strain>cv. Landsberg erecta</strain>
        <strain>cv. Wassilewskija</strain>
    </source>
</reference>
<reference key="6">
    <citation type="journal article" date="2004" name="Plant Physiol.">
        <title>The GATA family of transcription factors in Arabidopsis and rice.</title>
        <authorList>
            <person name="Reyes J.C."/>
            <person name="Muro-Pastor M.I."/>
            <person name="Florencio F.J."/>
        </authorList>
    </citation>
    <scope>GENE FAMILY ORGANIZATION</scope>
</reference>